<feature type="chain" id="PRO_0000443904" description="Ubiquitin-like protein ATG12">
    <location>
        <begin position="1"/>
        <end position="160"/>
    </location>
</feature>
<feature type="region of interest" description="Disordered" evidence="2">
    <location>
        <begin position="1"/>
        <end position="40"/>
    </location>
</feature>
<feature type="cross-link" description="Glycyl lysine isopeptide (Gly-Lys) (interchain with K-102 in ATG5)" evidence="1">
    <location>
        <position position="160"/>
    </location>
</feature>
<protein>
    <recommendedName>
        <fullName evidence="1">Ubiquitin-like protein ATG12</fullName>
    </recommendedName>
    <alternativeName>
        <fullName evidence="4">Autophagy-related protein 12</fullName>
    </alternativeName>
</protein>
<reference key="1">
    <citation type="journal article" date="2007" name="Science">
        <title>The Fusarium graminearum genome reveals a link between localized polymorphism and pathogen specialization.</title>
        <authorList>
            <person name="Cuomo C.A."/>
            <person name="Gueldener U."/>
            <person name="Xu J.-R."/>
            <person name="Trail F."/>
            <person name="Turgeon B.G."/>
            <person name="Di Pietro A."/>
            <person name="Walton J.D."/>
            <person name="Ma L.-J."/>
            <person name="Baker S.E."/>
            <person name="Rep M."/>
            <person name="Adam G."/>
            <person name="Antoniw J."/>
            <person name="Baldwin T."/>
            <person name="Calvo S.E."/>
            <person name="Chang Y.-L."/>
            <person name="DeCaprio D."/>
            <person name="Gale L.R."/>
            <person name="Gnerre S."/>
            <person name="Goswami R.S."/>
            <person name="Hammond-Kosack K."/>
            <person name="Harris L.J."/>
            <person name="Hilburn K."/>
            <person name="Kennell J.C."/>
            <person name="Kroken S."/>
            <person name="Magnuson J.K."/>
            <person name="Mannhaupt G."/>
            <person name="Mauceli E.W."/>
            <person name="Mewes H.-W."/>
            <person name="Mitterbauer R."/>
            <person name="Muehlbauer G."/>
            <person name="Muensterkoetter M."/>
            <person name="Nelson D."/>
            <person name="O'Donnell K."/>
            <person name="Ouellet T."/>
            <person name="Qi W."/>
            <person name="Quesneville H."/>
            <person name="Roncero M.I.G."/>
            <person name="Seong K.-Y."/>
            <person name="Tetko I.V."/>
            <person name="Urban M."/>
            <person name="Waalwijk C."/>
            <person name="Ward T.J."/>
            <person name="Yao J."/>
            <person name="Birren B.W."/>
            <person name="Kistler H.C."/>
        </authorList>
    </citation>
    <scope>NUCLEOTIDE SEQUENCE [LARGE SCALE GENOMIC DNA]</scope>
    <source>
        <strain>ATCC MYA-4620 / CBS 123657 / FGSC 9075 / NRRL 31084 / PH-1</strain>
    </source>
</reference>
<reference key="2">
    <citation type="journal article" date="2010" name="Nature">
        <title>Comparative genomics reveals mobile pathogenicity chromosomes in Fusarium.</title>
        <authorList>
            <person name="Ma L.-J."/>
            <person name="van der Does H.C."/>
            <person name="Borkovich K.A."/>
            <person name="Coleman J.J."/>
            <person name="Daboussi M.-J."/>
            <person name="Di Pietro A."/>
            <person name="Dufresne M."/>
            <person name="Freitag M."/>
            <person name="Grabherr M."/>
            <person name="Henrissat B."/>
            <person name="Houterman P.M."/>
            <person name="Kang S."/>
            <person name="Shim W.-B."/>
            <person name="Woloshuk C."/>
            <person name="Xie X."/>
            <person name="Xu J.-R."/>
            <person name="Antoniw J."/>
            <person name="Baker S.E."/>
            <person name="Bluhm B.H."/>
            <person name="Breakspear A."/>
            <person name="Brown D.W."/>
            <person name="Butchko R.A.E."/>
            <person name="Chapman S."/>
            <person name="Coulson R."/>
            <person name="Coutinho P.M."/>
            <person name="Danchin E.G.J."/>
            <person name="Diener A."/>
            <person name="Gale L.R."/>
            <person name="Gardiner D.M."/>
            <person name="Goff S."/>
            <person name="Hammond-Kosack K.E."/>
            <person name="Hilburn K."/>
            <person name="Hua-Van A."/>
            <person name="Jonkers W."/>
            <person name="Kazan K."/>
            <person name="Kodira C.D."/>
            <person name="Koehrsen M."/>
            <person name="Kumar L."/>
            <person name="Lee Y.-H."/>
            <person name="Li L."/>
            <person name="Manners J.M."/>
            <person name="Miranda-Saavedra D."/>
            <person name="Mukherjee M."/>
            <person name="Park G."/>
            <person name="Park J."/>
            <person name="Park S.-Y."/>
            <person name="Proctor R.H."/>
            <person name="Regev A."/>
            <person name="Ruiz-Roldan M.C."/>
            <person name="Sain D."/>
            <person name="Sakthikumar S."/>
            <person name="Sykes S."/>
            <person name="Schwartz D.C."/>
            <person name="Turgeon B.G."/>
            <person name="Wapinski I."/>
            <person name="Yoder O."/>
            <person name="Young S."/>
            <person name="Zeng Q."/>
            <person name="Zhou S."/>
            <person name="Galagan J."/>
            <person name="Cuomo C.A."/>
            <person name="Kistler H.C."/>
            <person name="Rep M."/>
        </authorList>
    </citation>
    <scope>GENOME REANNOTATION</scope>
    <source>
        <strain>ATCC MYA-4620 / CBS 123657 / FGSC 9075 / NRRL 31084 / PH-1</strain>
    </source>
</reference>
<reference key="3">
    <citation type="journal article" date="2015" name="BMC Genomics">
        <title>The completed genome sequence of the pathogenic ascomycete fungus Fusarium graminearum.</title>
        <authorList>
            <person name="King R."/>
            <person name="Urban M."/>
            <person name="Hammond-Kosack M.C.U."/>
            <person name="Hassani-Pak K."/>
            <person name="Hammond-Kosack K.E."/>
        </authorList>
    </citation>
    <scope>NUCLEOTIDE SEQUENCE [LARGE SCALE GENOMIC DNA]</scope>
    <source>
        <strain>ATCC MYA-4620 / CBS 123657 / FGSC 9075 / NRRL 31084 / PH-1</strain>
    </source>
</reference>
<reference key="4">
    <citation type="journal article" date="2017" name="Sci. Rep.">
        <title>Genome-wide functional analysis reveals that autophagy is necessary for growth, sporulation, deoxynivalenol production and virulence in Fusarium graminearum.</title>
        <authorList>
            <person name="Lv W."/>
            <person name="Wang C."/>
            <person name="Yang N."/>
            <person name="Que Y."/>
            <person name="Talbot N.J."/>
            <person name="Wang Z."/>
        </authorList>
    </citation>
    <scope>IDENTIFICATION</scope>
    <scope>FUNCTION</scope>
    <scope>DISRUPTION PHENOTYPE</scope>
</reference>
<comment type="function">
    <text evidence="1 3">Ubiquitin-like protein involved in cytoplasm to vacuole transport (Cvt), autophagy vesicles formation, mitophagy, and nucleophagy (By similarity). Conjugation with ATG5 through a ubiquitin-like conjugating system involving also ATG7 as an E1-like activating enzyme and ATG10 as an E2-like conjugating enzyme, is essential for its function (By similarity). The ATG12-ATG5 conjugate acts as an E3-like enzyme which is required for lipidation of ATG8 and ATG8 association to the vesicle membranes (By similarity). ATG12-ATG5 rearranges the ATG3 catalytic center and enhances its E2 activity (By similarity). Autophagy is required for proper vegetative growth, asexual/sexual reproduction, and full virulence (PubMed:28894236). Autophagy is particularly involved in the biosynthesis of deoxynivalenol (DON), an important virulence determinant (PubMed:28894236).</text>
</comment>
<comment type="subunit">
    <text evidence="1">Forms a conjugate with ATG5 (By similarity). Forms a thioester bond with the 'Cys-196' of ATG10 (By similarity). Interacts with the ATG7 C-terminal 40 amino acids domain (By similarity). The ATG12-ATG5 conjugate forms a complex with several units of ATG16 (By similarity). The ATG12-ATG5 conjugate also associates with ATG3 (By similarity).</text>
</comment>
<comment type="subcellular location">
    <subcellularLocation>
        <location evidence="1">Preautophagosomal structure membrane</location>
        <topology evidence="1">Peripheral membrane protein</topology>
    </subcellularLocation>
    <text evidence="1">Localizes to the isolation membrane (IM), a membrane sac which is generated from the pre-autophagosomal structure (PAS) (By similarity). Ultimately, the IM expands to become a mature autophagosome (By similarity). Localizes also to a dot at the junction between the IM and the vacuolar membrane, termed the vacuole-IM contact site (VICS) (By similarity).</text>
</comment>
<comment type="disruption phenotype">
    <text evidence="3">Does not significantly decrease the growth rate under nutrient-rich conditions (PubMed:28894236). Causes only mild infection in point-inoculated spikelets of flowering wheat heads and impairs the spreading to nearby spikelets (PubMed:28894236). Reduces strongly the production of deoxynivalenol (DON), an important virulence determinant (PubMed:28894236).</text>
</comment>
<comment type="similarity">
    <text evidence="5">Belongs to the ATG12 family.</text>
</comment>
<evidence type="ECO:0000250" key="1">
    <source>
        <dbReference type="UniProtKB" id="P38316"/>
    </source>
</evidence>
<evidence type="ECO:0000256" key="2">
    <source>
        <dbReference type="SAM" id="MobiDB-lite"/>
    </source>
</evidence>
<evidence type="ECO:0000269" key="3">
    <source>
    </source>
</evidence>
<evidence type="ECO:0000303" key="4">
    <source>
    </source>
</evidence>
<evidence type="ECO:0000305" key="5"/>
<keyword id="KW-0072">Autophagy</keyword>
<keyword id="KW-1017">Isopeptide bond</keyword>
<keyword id="KW-0472">Membrane</keyword>
<keyword id="KW-0653">Protein transport</keyword>
<keyword id="KW-1185">Reference proteome</keyword>
<keyword id="KW-0813">Transport</keyword>
<keyword id="KW-0833">Ubl conjugation pathway</keyword>
<accession>A0A0E0SC50</accession>
<name>ATG12_GIBZE</name>
<gene>
    <name evidence="4" type="primary">ATG12</name>
    <name type="ORF">FGRAMPH1_01T27403</name>
</gene>
<organism>
    <name type="scientific">Gibberella zeae (strain ATCC MYA-4620 / CBS 123657 / FGSC 9075 / NRRL 31084 / PH-1)</name>
    <name type="common">Wheat head blight fungus</name>
    <name type="synonym">Fusarium graminearum</name>
    <dbReference type="NCBI Taxonomy" id="229533"/>
    <lineage>
        <taxon>Eukaryota</taxon>
        <taxon>Fungi</taxon>
        <taxon>Dikarya</taxon>
        <taxon>Ascomycota</taxon>
        <taxon>Pezizomycotina</taxon>
        <taxon>Sordariomycetes</taxon>
        <taxon>Hypocreomycetidae</taxon>
        <taxon>Hypocreales</taxon>
        <taxon>Nectriaceae</taxon>
        <taxon>Fusarium</taxon>
    </lineage>
</organism>
<proteinExistence type="inferred from homology"/>
<dbReference type="EMBL" id="HG970335">
    <property type="protein sequence ID" value="CEF84013.1"/>
    <property type="molecule type" value="Genomic_DNA"/>
</dbReference>
<dbReference type="SMR" id="A0A0E0SC50"/>
<dbReference type="STRING" id="229533.A0A0E0SC50"/>
<dbReference type="VEuPathDB" id="FungiDB:FGRAMPH1_01G27403"/>
<dbReference type="eggNOG" id="KOG3439">
    <property type="taxonomic scope" value="Eukaryota"/>
</dbReference>
<dbReference type="InParanoid" id="A0A0E0SC50"/>
<dbReference type="Proteomes" id="UP000070720">
    <property type="component" value="Chromosome 4"/>
</dbReference>
<dbReference type="GO" id="GO:0034274">
    <property type="term" value="C:Atg12-Atg5-Atg16 complex"/>
    <property type="evidence" value="ECO:0007669"/>
    <property type="project" value="TreeGrafter"/>
</dbReference>
<dbReference type="GO" id="GO:0000421">
    <property type="term" value="C:autophagosome membrane"/>
    <property type="evidence" value="ECO:0007669"/>
    <property type="project" value="TreeGrafter"/>
</dbReference>
<dbReference type="GO" id="GO:0034045">
    <property type="term" value="C:phagophore assembly site membrane"/>
    <property type="evidence" value="ECO:0007669"/>
    <property type="project" value="UniProtKB-SubCell"/>
</dbReference>
<dbReference type="GO" id="GO:0019776">
    <property type="term" value="F:Atg8-family ligase activity"/>
    <property type="evidence" value="ECO:0007669"/>
    <property type="project" value="TreeGrafter"/>
</dbReference>
<dbReference type="GO" id="GO:0000045">
    <property type="term" value="P:autophagosome assembly"/>
    <property type="evidence" value="ECO:0007669"/>
    <property type="project" value="InterPro"/>
</dbReference>
<dbReference type="GO" id="GO:0097352">
    <property type="term" value="P:autophagosome maturation"/>
    <property type="evidence" value="ECO:0007669"/>
    <property type="project" value="TreeGrafter"/>
</dbReference>
<dbReference type="GO" id="GO:0000422">
    <property type="term" value="P:autophagy of mitochondrion"/>
    <property type="evidence" value="ECO:0007669"/>
    <property type="project" value="TreeGrafter"/>
</dbReference>
<dbReference type="GO" id="GO:0061723">
    <property type="term" value="P:glycophagy"/>
    <property type="evidence" value="ECO:0007669"/>
    <property type="project" value="TreeGrafter"/>
</dbReference>
<dbReference type="GO" id="GO:0034727">
    <property type="term" value="P:piecemeal microautophagy of the nucleus"/>
    <property type="evidence" value="ECO:0007669"/>
    <property type="project" value="TreeGrafter"/>
</dbReference>
<dbReference type="GO" id="GO:0015031">
    <property type="term" value="P:protein transport"/>
    <property type="evidence" value="ECO:0007669"/>
    <property type="project" value="UniProtKB-KW"/>
</dbReference>
<dbReference type="CDD" id="cd01612">
    <property type="entry name" value="Ubl_ATG12"/>
    <property type="match status" value="1"/>
</dbReference>
<dbReference type="FunFam" id="3.10.20.90:FF:000148">
    <property type="entry name" value="Ubiquitin-like protein ATG12"/>
    <property type="match status" value="1"/>
</dbReference>
<dbReference type="Gene3D" id="3.10.20.90">
    <property type="entry name" value="Phosphatidylinositol 3-kinase Catalytic Subunit, Chain A, domain 1"/>
    <property type="match status" value="1"/>
</dbReference>
<dbReference type="InterPro" id="IPR007242">
    <property type="entry name" value="Atg12"/>
</dbReference>
<dbReference type="InterPro" id="IPR029071">
    <property type="entry name" value="Ubiquitin-like_domsf"/>
</dbReference>
<dbReference type="PANTHER" id="PTHR13385">
    <property type="entry name" value="AUTOPHAGY PROTEIN 12"/>
    <property type="match status" value="1"/>
</dbReference>
<dbReference type="PANTHER" id="PTHR13385:SF0">
    <property type="entry name" value="UBIQUITIN-LIKE PROTEIN ATG12"/>
    <property type="match status" value="1"/>
</dbReference>
<dbReference type="Pfam" id="PF04110">
    <property type="entry name" value="APG12"/>
    <property type="match status" value="1"/>
</dbReference>
<dbReference type="SUPFAM" id="SSF54236">
    <property type="entry name" value="Ubiquitin-like"/>
    <property type="match status" value="1"/>
</dbReference>
<sequence length="160" mass="16880">MSETPKDQGPSSPSPSPSPSAASPMPLADNEVAGSGASSPNLPLTMSASVVLADLPRDATAALEAAGSFKTDKIVVRFKPVGSAPLLAQDVCKISATRRFEEVVRYLRKKLRCKETDSVFLYVNSAFAPSLDEVVGNLHQCFKNSHGQLVVAYSLTPAFG</sequence>